<comment type="function">
    <text evidence="1">Required for accurate and efficient protein synthesis under certain stress conditions. May act as a fidelity factor of the translation reaction, by catalyzing a one-codon backward translocation of tRNAs on improperly translocated ribosomes. Back-translocation proceeds from a post-translocation (POST) complex to a pre-translocation (PRE) complex, thus giving elongation factor G a second chance to translocate the tRNAs correctly. Binds to ribosomes in a GTP-dependent manner.</text>
</comment>
<comment type="catalytic activity">
    <reaction evidence="1">
        <text>GTP + H2O = GDP + phosphate + H(+)</text>
        <dbReference type="Rhea" id="RHEA:19669"/>
        <dbReference type="ChEBI" id="CHEBI:15377"/>
        <dbReference type="ChEBI" id="CHEBI:15378"/>
        <dbReference type="ChEBI" id="CHEBI:37565"/>
        <dbReference type="ChEBI" id="CHEBI:43474"/>
        <dbReference type="ChEBI" id="CHEBI:58189"/>
        <dbReference type="EC" id="3.6.5.n1"/>
    </reaction>
</comment>
<comment type="subcellular location">
    <subcellularLocation>
        <location evidence="1">Cell inner membrane</location>
        <topology evidence="1">Peripheral membrane protein</topology>
        <orientation evidence="1">Cytoplasmic side</orientation>
    </subcellularLocation>
</comment>
<comment type="similarity">
    <text evidence="1">Belongs to the TRAFAC class translation factor GTPase superfamily. Classic translation factor GTPase family. LepA subfamily.</text>
</comment>
<evidence type="ECO:0000255" key="1">
    <source>
        <dbReference type="HAMAP-Rule" id="MF_00071"/>
    </source>
</evidence>
<organism>
    <name type="scientific">Pseudomonas putida (strain W619)</name>
    <dbReference type="NCBI Taxonomy" id="390235"/>
    <lineage>
        <taxon>Bacteria</taxon>
        <taxon>Pseudomonadati</taxon>
        <taxon>Pseudomonadota</taxon>
        <taxon>Gammaproteobacteria</taxon>
        <taxon>Pseudomonadales</taxon>
        <taxon>Pseudomonadaceae</taxon>
        <taxon>Pseudomonas</taxon>
    </lineage>
</organism>
<reference key="1">
    <citation type="submission" date="2008-02" db="EMBL/GenBank/DDBJ databases">
        <title>Complete sequence of Pseudomonas putida W619.</title>
        <authorList>
            <person name="Copeland A."/>
            <person name="Lucas S."/>
            <person name="Lapidus A."/>
            <person name="Barry K."/>
            <person name="Detter J.C."/>
            <person name="Glavina del Rio T."/>
            <person name="Dalin E."/>
            <person name="Tice H."/>
            <person name="Pitluck S."/>
            <person name="Chain P."/>
            <person name="Malfatti S."/>
            <person name="Shin M."/>
            <person name="Vergez L."/>
            <person name="Schmutz J."/>
            <person name="Larimer F."/>
            <person name="Land M."/>
            <person name="Hauser L."/>
            <person name="Kyrpides N."/>
            <person name="Kim E."/>
            <person name="Taghavi S."/>
            <person name="Vangronsveld D."/>
            <person name="van der Lelie D."/>
            <person name="Richardson P."/>
        </authorList>
    </citation>
    <scope>NUCLEOTIDE SEQUENCE [LARGE SCALE GENOMIC DNA]</scope>
    <source>
        <strain>W619</strain>
    </source>
</reference>
<accession>B1J4D8</accession>
<name>LEPA_PSEPW</name>
<feature type="chain" id="PRO_1000092430" description="Elongation factor 4">
    <location>
        <begin position="1"/>
        <end position="599"/>
    </location>
</feature>
<feature type="domain" description="tr-type G">
    <location>
        <begin position="5"/>
        <end position="187"/>
    </location>
</feature>
<feature type="binding site" evidence="1">
    <location>
        <begin position="17"/>
        <end position="22"/>
    </location>
    <ligand>
        <name>GTP</name>
        <dbReference type="ChEBI" id="CHEBI:37565"/>
    </ligand>
</feature>
<feature type="binding site" evidence="1">
    <location>
        <begin position="134"/>
        <end position="137"/>
    </location>
    <ligand>
        <name>GTP</name>
        <dbReference type="ChEBI" id="CHEBI:37565"/>
    </ligand>
</feature>
<proteinExistence type="inferred from homology"/>
<keyword id="KW-0997">Cell inner membrane</keyword>
<keyword id="KW-1003">Cell membrane</keyword>
<keyword id="KW-0342">GTP-binding</keyword>
<keyword id="KW-0378">Hydrolase</keyword>
<keyword id="KW-0472">Membrane</keyword>
<keyword id="KW-0547">Nucleotide-binding</keyword>
<keyword id="KW-0648">Protein biosynthesis</keyword>
<sequence>MSDLSHIRNFSIIAHIDHGKSTLADRFIQMCGGLSAREMEAQVLDSMDLERERGITIKAHSVTLHYKALDGKTYQLNFIDTPGHVDFTYEVSRSLAACEGALLVVDAGQGVEAQSVANCYTAIEQGLEVMPVLNKMDLPQADPDRVKDEIEKIIGIDATDAVACSAKSGMGVDEVLERLVHTIPAPVGEIDAPLQALIIDSWFDNYLGVVSLVRVRQGRVKKGDKILVKSTGKVHLVDSVGVFTPKHTQTADLKAGEVGFIIASIKDIHGAPVGDTLTLSSTPEVEMLAGFKKIQPQVYAGLFPVSSDDFEDFRDALQKLTLNDSSLQYMPESSDALGFGFRCGFLGMLHMEIIQERLEREYDLDLITTAPSVIYELELKTGETIVVDNPSKLPDVSSVTDFREPIVTATILVPQEHLGNVITLCIEKRGVQRDMQFLGSQVQVRYDMPMNEVVLDFFDRLKSTSRGYASLDYHFDRYQSANLVKLDVLINGDKVDALALIVHRDNAAYKGRALTEKMKELIPRQMFDVAIQAAIGGQIIARTTVKALRKNVLAKCYGGDVSRKKKLLEKQKAGKKRMKQVGNVEIPQEAFLAVLRLDS</sequence>
<gene>
    <name evidence="1" type="primary">lepA</name>
    <name type="ordered locus">PputW619_1071</name>
</gene>
<protein>
    <recommendedName>
        <fullName evidence="1">Elongation factor 4</fullName>
        <shortName evidence="1">EF-4</shortName>
        <ecNumber evidence="1">3.6.5.n1</ecNumber>
    </recommendedName>
    <alternativeName>
        <fullName evidence="1">Ribosomal back-translocase LepA</fullName>
    </alternativeName>
</protein>
<dbReference type="EC" id="3.6.5.n1" evidence="1"/>
<dbReference type="EMBL" id="CP000949">
    <property type="protein sequence ID" value="ACA71576.1"/>
    <property type="molecule type" value="Genomic_DNA"/>
</dbReference>
<dbReference type="SMR" id="B1J4D8"/>
<dbReference type="STRING" id="390235.PputW619_1071"/>
<dbReference type="KEGG" id="ppw:PputW619_1071"/>
<dbReference type="eggNOG" id="COG0481">
    <property type="taxonomic scope" value="Bacteria"/>
</dbReference>
<dbReference type="HOGENOM" id="CLU_009995_3_3_6"/>
<dbReference type="OrthoDB" id="9801472at2"/>
<dbReference type="GO" id="GO:0005886">
    <property type="term" value="C:plasma membrane"/>
    <property type="evidence" value="ECO:0007669"/>
    <property type="project" value="UniProtKB-SubCell"/>
</dbReference>
<dbReference type="GO" id="GO:0005525">
    <property type="term" value="F:GTP binding"/>
    <property type="evidence" value="ECO:0007669"/>
    <property type="project" value="UniProtKB-UniRule"/>
</dbReference>
<dbReference type="GO" id="GO:0003924">
    <property type="term" value="F:GTPase activity"/>
    <property type="evidence" value="ECO:0007669"/>
    <property type="project" value="UniProtKB-UniRule"/>
</dbReference>
<dbReference type="GO" id="GO:0097216">
    <property type="term" value="F:guanosine tetraphosphate binding"/>
    <property type="evidence" value="ECO:0007669"/>
    <property type="project" value="UniProtKB-ARBA"/>
</dbReference>
<dbReference type="GO" id="GO:0043022">
    <property type="term" value="F:ribosome binding"/>
    <property type="evidence" value="ECO:0007669"/>
    <property type="project" value="UniProtKB-UniRule"/>
</dbReference>
<dbReference type="GO" id="GO:0003746">
    <property type="term" value="F:translation elongation factor activity"/>
    <property type="evidence" value="ECO:0007669"/>
    <property type="project" value="UniProtKB-UniRule"/>
</dbReference>
<dbReference type="GO" id="GO:0045727">
    <property type="term" value="P:positive regulation of translation"/>
    <property type="evidence" value="ECO:0007669"/>
    <property type="project" value="UniProtKB-UniRule"/>
</dbReference>
<dbReference type="CDD" id="cd03699">
    <property type="entry name" value="EF4_II"/>
    <property type="match status" value="1"/>
</dbReference>
<dbReference type="CDD" id="cd16260">
    <property type="entry name" value="EF4_III"/>
    <property type="match status" value="1"/>
</dbReference>
<dbReference type="CDD" id="cd01890">
    <property type="entry name" value="LepA"/>
    <property type="match status" value="1"/>
</dbReference>
<dbReference type="CDD" id="cd03709">
    <property type="entry name" value="lepA_C"/>
    <property type="match status" value="1"/>
</dbReference>
<dbReference type="FunFam" id="3.40.50.300:FF:000078">
    <property type="entry name" value="Elongation factor 4"/>
    <property type="match status" value="1"/>
</dbReference>
<dbReference type="FunFam" id="2.40.30.10:FF:000015">
    <property type="entry name" value="Translation factor GUF1, mitochondrial"/>
    <property type="match status" value="1"/>
</dbReference>
<dbReference type="FunFam" id="3.30.70.240:FF:000007">
    <property type="entry name" value="Translation factor GUF1, mitochondrial"/>
    <property type="match status" value="1"/>
</dbReference>
<dbReference type="FunFam" id="3.30.70.2570:FF:000001">
    <property type="entry name" value="Translation factor GUF1, mitochondrial"/>
    <property type="match status" value="1"/>
</dbReference>
<dbReference type="FunFam" id="3.30.70.870:FF:000004">
    <property type="entry name" value="Translation factor GUF1, mitochondrial"/>
    <property type="match status" value="1"/>
</dbReference>
<dbReference type="Gene3D" id="3.30.70.240">
    <property type="match status" value="1"/>
</dbReference>
<dbReference type="Gene3D" id="3.30.70.2570">
    <property type="entry name" value="Elongation factor 4, C-terminal domain"/>
    <property type="match status" value="1"/>
</dbReference>
<dbReference type="Gene3D" id="3.30.70.870">
    <property type="entry name" value="Elongation Factor G (Translational Gtpase), domain 3"/>
    <property type="match status" value="1"/>
</dbReference>
<dbReference type="Gene3D" id="3.40.50.300">
    <property type="entry name" value="P-loop containing nucleotide triphosphate hydrolases"/>
    <property type="match status" value="1"/>
</dbReference>
<dbReference type="Gene3D" id="2.40.30.10">
    <property type="entry name" value="Translation factors"/>
    <property type="match status" value="1"/>
</dbReference>
<dbReference type="HAMAP" id="MF_00071">
    <property type="entry name" value="LepA"/>
    <property type="match status" value="1"/>
</dbReference>
<dbReference type="InterPro" id="IPR006297">
    <property type="entry name" value="EF-4"/>
</dbReference>
<dbReference type="InterPro" id="IPR035647">
    <property type="entry name" value="EFG_III/V"/>
</dbReference>
<dbReference type="InterPro" id="IPR000640">
    <property type="entry name" value="EFG_V-like"/>
</dbReference>
<dbReference type="InterPro" id="IPR004161">
    <property type="entry name" value="EFTu-like_2"/>
</dbReference>
<dbReference type="InterPro" id="IPR038363">
    <property type="entry name" value="LepA_C_sf"/>
</dbReference>
<dbReference type="InterPro" id="IPR013842">
    <property type="entry name" value="LepA_CTD"/>
</dbReference>
<dbReference type="InterPro" id="IPR035654">
    <property type="entry name" value="LepA_IV"/>
</dbReference>
<dbReference type="InterPro" id="IPR027417">
    <property type="entry name" value="P-loop_NTPase"/>
</dbReference>
<dbReference type="InterPro" id="IPR005225">
    <property type="entry name" value="Small_GTP-bd"/>
</dbReference>
<dbReference type="InterPro" id="IPR000795">
    <property type="entry name" value="T_Tr_GTP-bd_dom"/>
</dbReference>
<dbReference type="NCBIfam" id="TIGR01393">
    <property type="entry name" value="lepA"/>
    <property type="match status" value="1"/>
</dbReference>
<dbReference type="NCBIfam" id="TIGR00231">
    <property type="entry name" value="small_GTP"/>
    <property type="match status" value="1"/>
</dbReference>
<dbReference type="PANTHER" id="PTHR43512:SF4">
    <property type="entry name" value="TRANSLATION FACTOR GUF1 HOMOLOG, CHLOROPLASTIC"/>
    <property type="match status" value="1"/>
</dbReference>
<dbReference type="PANTHER" id="PTHR43512">
    <property type="entry name" value="TRANSLATION FACTOR GUF1-RELATED"/>
    <property type="match status" value="1"/>
</dbReference>
<dbReference type="Pfam" id="PF00679">
    <property type="entry name" value="EFG_C"/>
    <property type="match status" value="1"/>
</dbReference>
<dbReference type="Pfam" id="PF00009">
    <property type="entry name" value="GTP_EFTU"/>
    <property type="match status" value="1"/>
</dbReference>
<dbReference type="Pfam" id="PF03144">
    <property type="entry name" value="GTP_EFTU_D2"/>
    <property type="match status" value="1"/>
</dbReference>
<dbReference type="Pfam" id="PF06421">
    <property type="entry name" value="LepA_C"/>
    <property type="match status" value="1"/>
</dbReference>
<dbReference type="PRINTS" id="PR00315">
    <property type="entry name" value="ELONGATNFCT"/>
</dbReference>
<dbReference type="SUPFAM" id="SSF54980">
    <property type="entry name" value="EF-G C-terminal domain-like"/>
    <property type="match status" value="2"/>
</dbReference>
<dbReference type="SUPFAM" id="SSF52540">
    <property type="entry name" value="P-loop containing nucleoside triphosphate hydrolases"/>
    <property type="match status" value="1"/>
</dbReference>
<dbReference type="PROSITE" id="PS51722">
    <property type="entry name" value="G_TR_2"/>
    <property type="match status" value="1"/>
</dbReference>